<keyword id="KW-0378">Hydrolase</keyword>
<keyword id="KW-1185">Reference proteome</keyword>
<reference key="1">
    <citation type="journal article" date="2005" name="Nature">
        <title>Sequencing of Aspergillus nidulans and comparative analysis with A. fumigatus and A. oryzae.</title>
        <authorList>
            <person name="Galagan J.E."/>
            <person name="Calvo S.E."/>
            <person name="Cuomo C."/>
            <person name="Ma L.-J."/>
            <person name="Wortman J.R."/>
            <person name="Batzoglou S."/>
            <person name="Lee S.-I."/>
            <person name="Bastuerkmen M."/>
            <person name="Spevak C.C."/>
            <person name="Clutterbuck J."/>
            <person name="Kapitonov V."/>
            <person name="Jurka J."/>
            <person name="Scazzocchio C."/>
            <person name="Farman M.L."/>
            <person name="Butler J."/>
            <person name="Purcell S."/>
            <person name="Harris S."/>
            <person name="Braus G.H."/>
            <person name="Draht O."/>
            <person name="Busch S."/>
            <person name="D'Enfert C."/>
            <person name="Bouchier C."/>
            <person name="Goldman G.H."/>
            <person name="Bell-Pedersen D."/>
            <person name="Griffiths-Jones S."/>
            <person name="Doonan J.H."/>
            <person name="Yu J."/>
            <person name="Vienken K."/>
            <person name="Pain A."/>
            <person name="Freitag M."/>
            <person name="Selker E.U."/>
            <person name="Archer D.B."/>
            <person name="Penalva M.A."/>
            <person name="Oakley B.R."/>
            <person name="Momany M."/>
            <person name="Tanaka T."/>
            <person name="Kumagai T."/>
            <person name="Asai K."/>
            <person name="Machida M."/>
            <person name="Nierman W.C."/>
            <person name="Denning D.W."/>
            <person name="Caddick M.X."/>
            <person name="Hynes M."/>
            <person name="Paoletti M."/>
            <person name="Fischer R."/>
            <person name="Miller B.L."/>
            <person name="Dyer P.S."/>
            <person name="Sachs M.S."/>
            <person name="Osmani S.A."/>
            <person name="Birren B.W."/>
        </authorList>
    </citation>
    <scope>NUCLEOTIDE SEQUENCE [LARGE SCALE GENOMIC DNA]</scope>
    <source>
        <strain>FGSC A4 / ATCC 38163 / CBS 112.46 / NRRL 194 / M139</strain>
    </source>
</reference>
<reference key="2">
    <citation type="journal article" date="2009" name="Fungal Genet. Biol.">
        <title>The 2008 update of the Aspergillus nidulans genome annotation: a community effort.</title>
        <authorList>
            <person name="Wortman J.R."/>
            <person name="Gilsenan J.M."/>
            <person name="Joardar V."/>
            <person name="Deegan J."/>
            <person name="Clutterbuck J."/>
            <person name="Andersen M.R."/>
            <person name="Archer D."/>
            <person name="Bencina M."/>
            <person name="Braus G."/>
            <person name="Coutinho P."/>
            <person name="von Dohren H."/>
            <person name="Doonan J."/>
            <person name="Driessen A.J."/>
            <person name="Durek P."/>
            <person name="Espeso E."/>
            <person name="Fekete E."/>
            <person name="Flipphi M."/>
            <person name="Estrada C.G."/>
            <person name="Geysens S."/>
            <person name="Goldman G."/>
            <person name="de Groot P.W."/>
            <person name="Hansen K."/>
            <person name="Harris S.D."/>
            <person name="Heinekamp T."/>
            <person name="Helmstaedt K."/>
            <person name="Henrissat B."/>
            <person name="Hofmann G."/>
            <person name="Homan T."/>
            <person name="Horio T."/>
            <person name="Horiuchi H."/>
            <person name="James S."/>
            <person name="Jones M."/>
            <person name="Karaffa L."/>
            <person name="Karanyi Z."/>
            <person name="Kato M."/>
            <person name="Keller N."/>
            <person name="Kelly D.E."/>
            <person name="Kiel J.A."/>
            <person name="Kim J.M."/>
            <person name="van der Klei I.J."/>
            <person name="Klis F.M."/>
            <person name="Kovalchuk A."/>
            <person name="Krasevec N."/>
            <person name="Kubicek C.P."/>
            <person name="Liu B."/>
            <person name="Maccabe A."/>
            <person name="Meyer V."/>
            <person name="Mirabito P."/>
            <person name="Miskei M."/>
            <person name="Mos M."/>
            <person name="Mullins J."/>
            <person name="Nelson D.R."/>
            <person name="Nielsen J."/>
            <person name="Oakley B.R."/>
            <person name="Osmani S.A."/>
            <person name="Pakula T."/>
            <person name="Paszewski A."/>
            <person name="Paulsen I."/>
            <person name="Pilsyk S."/>
            <person name="Pocsi I."/>
            <person name="Punt P.J."/>
            <person name="Ram A.F."/>
            <person name="Ren Q."/>
            <person name="Robellet X."/>
            <person name="Robson G."/>
            <person name="Seiboth B."/>
            <person name="van Solingen P."/>
            <person name="Specht T."/>
            <person name="Sun J."/>
            <person name="Taheri-Talesh N."/>
            <person name="Takeshita N."/>
            <person name="Ussery D."/>
            <person name="vanKuyk P.A."/>
            <person name="Visser H."/>
            <person name="van de Vondervoort P.J."/>
            <person name="de Vries R.P."/>
            <person name="Walton J."/>
            <person name="Xiang X."/>
            <person name="Xiong Y."/>
            <person name="Zeng A.P."/>
            <person name="Brandt B.W."/>
            <person name="Cornell M.J."/>
            <person name="van den Hondel C.A."/>
            <person name="Visser J."/>
            <person name="Oliver S.G."/>
            <person name="Turner G."/>
        </authorList>
    </citation>
    <scope>GENOME REANNOTATION</scope>
    <source>
        <strain>FGSC A4 / ATCC 38163 / CBS 112.46 / NRRL 194 / M139</strain>
    </source>
</reference>
<reference key="3">
    <citation type="journal article" date="2024" name="J. Nat. Prod.">
        <title>Transcription Factor Engineering in Aspergillus nidulans Leads to the Discovery of an Orsellinaldehyde Derivative Produced via an Unlinked Polyketide Synthase Gene.</title>
        <authorList>
            <person name="Rabot C."/>
            <person name="Grau M.F."/>
            <person name="Entwistle R."/>
            <person name="Chiang Y.M."/>
            <person name="Zamora de Roberts Y."/>
            <person name="Ahuja M."/>
            <person name="Oakley C.E."/>
            <person name="Wang C.C.C."/>
            <person name="Todd R.B."/>
            <person name="Oakley B.R."/>
        </authorList>
    </citation>
    <scope>FUNCTION</scope>
</reference>
<accession>Q5AY37</accession>
<accession>C8V283</accession>
<protein>
    <recommendedName>
        <fullName evidence="4">Esterase AN6793</fullName>
        <ecNumber evidence="3">3.1.-.-</ecNumber>
    </recommendedName>
</protein>
<sequence>MRIRPSPPKKPTPGLLHEYADRLVAFEYSASKGLKPHTLLFISGLGDGLGTVAYLEDIVAALEGSQWSVFSPVISSSYGGWGTSGLGRDTDEMARCIEYIQKYKEGSGVHETERKIVIMGHSTGSQDVLTYISSPNPRHPQPGLDPGHGHRHKRMPPLRPQVDGAIMQAPVSDRQAIQTVLEEGNERHSAKYMRKVVNDAIAYAKKHTYEDYDSLDTIIPLPITAAIGYPASTAVSSRRFLSLTSPDSPDSPGEDDLFSSDLTDERLRKTFGMVRHRGVLKDQKGLLVLYSGNDPSVPAFVDKEGLLRRWRWATDADEKRAYWHGESGIIPGATHTLEGPGQVEQRKELVRRVWMFLADVEGDPRTSCHSARPLS</sequence>
<organism>
    <name type="scientific">Emericella nidulans (strain FGSC A4 / ATCC 38163 / CBS 112.46 / NRRL 194 / M139)</name>
    <name type="common">Aspergillus nidulans</name>
    <dbReference type="NCBI Taxonomy" id="227321"/>
    <lineage>
        <taxon>Eukaryota</taxon>
        <taxon>Fungi</taxon>
        <taxon>Dikarya</taxon>
        <taxon>Ascomycota</taxon>
        <taxon>Pezizomycotina</taxon>
        <taxon>Eurotiomycetes</taxon>
        <taxon>Eurotiomycetidae</taxon>
        <taxon>Eurotiales</taxon>
        <taxon>Aspergillaceae</taxon>
        <taxon>Aspergillus</taxon>
        <taxon>Aspergillus subgen. Nidulantes</taxon>
    </lineage>
</organism>
<proteinExistence type="inferred from homology"/>
<evidence type="ECO:0000250" key="1">
    <source>
        <dbReference type="UniProtKB" id="Q4WF56"/>
    </source>
</evidence>
<evidence type="ECO:0000256" key="2">
    <source>
        <dbReference type="SAM" id="MobiDB-lite"/>
    </source>
</evidence>
<evidence type="ECO:0000269" key="3">
    <source>
    </source>
</evidence>
<evidence type="ECO:0000303" key="4">
    <source>
    </source>
</evidence>
<evidence type="ECO:0000305" key="5"/>
<dbReference type="EC" id="3.1.-.-" evidence="3"/>
<dbReference type="EMBL" id="BN001301">
    <property type="protein sequence ID" value="CBF71470.1"/>
    <property type="molecule type" value="Genomic_DNA"/>
</dbReference>
<dbReference type="RefSeq" id="XP_664397.1">
    <property type="nucleotide sequence ID" value="XM_659305.1"/>
</dbReference>
<dbReference type="ESTHER" id="emeni-q5ay37">
    <property type="family name" value="Fusarinine_C_esterase_sidJ"/>
</dbReference>
<dbReference type="EnsemblFungi" id="CBF71470">
    <property type="protein sequence ID" value="CBF71470"/>
    <property type="gene ID" value="ANIA_06793"/>
</dbReference>
<dbReference type="GeneID" id="2870332"/>
<dbReference type="KEGG" id="ani:ANIA_06793"/>
<dbReference type="eggNOG" id="KOG4840">
    <property type="taxonomic scope" value="Eukaryota"/>
</dbReference>
<dbReference type="HOGENOM" id="CLU_049633_3_0_1"/>
<dbReference type="InParanoid" id="Q5AY37"/>
<dbReference type="OMA" id="PPWVNKE"/>
<dbReference type="OrthoDB" id="10034502at2759"/>
<dbReference type="Proteomes" id="UP000000560">
    <property type="component" value="Chromosome I"/>
</dbReference>
<dbReference type="GO" id="GO:0016787">
    <property type="term" value="F:hydrolase activity"/>
    <property type="evidence" value="ECO:0007669"/>
    <property type="project" value="UniProtKB-KW"/>
</dbReference>
<dbReference type="Gene3D" id="3.40.50.1820">
    <property type="entry name" value="alpha/beta hydrolase"/>
    <property type="match status" value="1"/>
</dbReference>
<dbReference type="InterPro" id="IPR029058">
    <property type="entry name" value="AB_hydrolase_fold"/>
</dbReference>
<dbReference type="InterPro" id="IPR013744">
    <property type="entry name" value="SidJ"/>
</dbReference>
<dbReference type="PANTHER" id="PTHR31591:SF4">
    <property type="entry name" value="PUTATIVE (AFU_ORTHOLOGUE AFUA_7G00330)-RELATED"/>
    <property type="match status" value="1"/>
</dbReference>
<dbReference type="PANTHER" id="PTHR31591">
    <property type="entry name" value="UPF0613 PROTEIN PB24D3.06C"/>
    <property type="match status" value="1"/>
</dbReference>
<dbReference type="Pfam" id="PF08538">
    <property type="entry name" value="DUF1749"/>
    <property type="match status" value="1"/>
</dbReference>
<dbReference type="SUPFAM" id="SSF53474">
    <property type="entry name" value="alpha/beta-Hydrolases"/>
    <property type="match status" value="1"/>
</dbReference>
<gene>
    <name type="ORF">AN6793</name>
    <name type="ORF">ANIA_06793</name>
</gene>
<comment type="function">
    <text evidence="3">Esterase; part of a cluster that mediates the biosynthesis of a yet undetermined secondary metabolite (PubMed:39334518). With the HR-PKS AN6791, produces a pathway intermediate compound with molecular weight 258 (PubMed:39334518).</text>
</comment>
<comment type="pathway">
    <text evidence="3">Secondary metabolite biosynthesis.</text>
</comment>
<comment type="subunit">
    <text evidence="1">Homodimer.</text>
</comment>
<comment type="similarity">
    <text evidence="5">Belongs to the sidJ hydrolase family.</text>
</comment>
<feature type="chain" id="PRO_0000461777" description="Esterase AN6793">
    <location>
        <begin position="1"/>
        <end position="375"/>
    </location>
</feature>
<feature type="region of interest" description="Disordered" evidence="2">
    <location>
        <begin position="138"/>
        <end position="158"/>
    </location>
</feature>
<name>EST93_EMENI</name>